<accession>P56179</accession>
<accession>A4D1I2</accession>
<accession>B3KSQ0</accession>
<accession>J3KR92</accession>
<accession>Q3ZAR6</accession>
<accession>Q9UPL2</accession>
<organism>
    <name type="scientific">Homo sapiens</name>
    <name type="common">Human</name>
    <dbReference type="NCBI Taxonomy" id="9606"/>
    <lineage>
        <taxon>Eukaryota</taxon>
        <taxon>Metazoa</taxon>
        <taxon>Chordata</taxon>
        <taxon>Craniata</taxon>
        <taxon>Vertebrata</taxon>
        <taxon>Euteleostomi</taxon>
        <taxon>Mammalia</taxon>
        <taxon>Eutheria</taxon>
        <taxon>Euarchontoglires</taxon>
        <taxon>Primates</taxon>
        <taxon>Haplorrhini</taxon>
        <taxon>Catarrhini</taxon>
        <taxon>Hominidae</taxon>
        <taxon>Homo</taxon>
    </lineage>
</organism>
<comment type="subcellular location">
    <subcellularLocation>
        <location evidence="1">Nucleus</location>
    </subcellularLocation>
</comment>
<comment type="alternative products">
    <event type="alternative splicing"/>
    <isoform>
        <id>P56179-1</id>
        <name>1</name>
        <sequence type="displayed"/>
    </isoform>
    <isoform>
        <id>P56179-2</id>
        <name>2</name>
        <sequence type="described" ref="VSP_040732"/>
    </isoform>
    <isoform>
        <id>P56179-3</id>
        <name>3</name>
        <sequence type="described" ref="VSP_047248"/>
    </isoform>
</comment>
<comment type="developmental stage">
    <text>First expressed in embryos at 8.5-9 days in facial and branchial arch mesenchyme, otic vesicles and frontonasal ectoderm around olfactory placodes, a day later expression is seen in the developing forebrain in primordia of the ganglionic eminence and ventral diencephalic regions. In day 12.5 embryos, expressed in the brain and bones, and also in all skeletal structures of midgestation embryos after the first cartilage formation, and expression progressively declines in both brain and skeleton in day 15 embryos.</text>
</comment>
<comment type="similarity">
    <text evidence="3">Belongs to the distal-less homeobox family.</text>
</comment>
<gene>
    <name type="primary">DLX6</name>
</gene>
<dbReference type="EMBL" id="AC004774">
    <property type="protein sequence ID" value="AAC17832.1"/>
    <property type="molecule type" value="Genomic_DNA"/>
</dbReference>
<dbReference type="EMBL" id="CH236949">
    <property type="protein sequence ID" value="EAL24122.1"/>
    <property type="molecule type" value="Genomic_DNA"/>
</dbReference>
<dbReference type="EMBL" id="CH471091">
    <property type="protein sequence ID" value="EAW76744.1"/>
    <property type="molecule type" value="Genomic_DNA"/>
</dbReference>
<dbReference type="EMBL" id="BC069363">
    <property type="protein sequence ID" value="AAH69363.1"/>
    <property type="molecule type" value="mRNA"/>
</dbReference>
<dbReference type="EMBL" id="BC103688">
    <property type="protein sequence ID" value="AAI03689.1"/>
    <property type="molecule type" value="mRNA"/>
</dbReference>
<dbReference type="EMBL" id="BC103689">
    <property type="protein sequence ID" value="AAI03690.1"/>
    <property type="molecule type" value="mRNA"/>
</dbReference>
<dbReference type="EMBL" id="BC103690">
    <property type="protein sequence ID" value="AAI03691.1"/>
    <property type="molecule type" value="mRNA"/>
</dbReference>
<dbReference type="EMBL" id="BC109381">
    <property type="protein sequence ID" value="AAI09382.1"/>
    <property type="molecule type" value="mRNA"/>
</dbReference>
<dbReference type="EMBL" id="AK094086">
    <property type="protein sequence ID" value="BAG52812.1"/>
    <property type="molecule type" value="mRNA"/>
</dbReference>
<dbReference type="CCDS" id="CCDS47647.2">
    <molecule id="P56179-3"/>
</dbReference>
<dbReference type="PIR" id="D53495">
    <property type="entry name" value="D53495"/>
</dbReference>
<dbReference type="RefSeq" id="NP_005213.3">
    <molecule id="P56179-3"/>
    <property type="nucleotide sequence ID" value="NM_005222.3"/>
</dbReference>
<dbReference type="SMR" id="P56179"/>
<dbReference type="BioGRID" id="108094">
    <property type="interactions" value="33"/>
</dbReference>
<dbReference type="FunCoup" id="P56179">
    <property type="interactions" value="298"/>
</dbReference>
<dbReference type="IntAct" id="P56179">
    <property type="interactions" value="26"/>
</dbReference>
<dbReference type="MINT" id="P56179"/>
<dbReference type="STRING" id="9606.ENSP00000428480"/>
<dbReference type="GlyGen" id="P56179">
    <property type="glycosylation" value="1 site, 1 N-linked glycan (1 site)"/>
</dbReference>
<dbReference type="iPTMnet" id="P56179"/>
<dbReference type="PhosphoSitePlus" id="P56179"/>
<dbReference type="BioMuta" id="DLX6"/>
<dbReference type="DMDM" id="12644330"/>
<dbReference type="jPOST" id="P56179"/>
<dbReference type="MassIVE" id="P56179"/>
<dbReference type="PaxDb" id="9606-ENSP00000428480"/>
<dbReference type="PeptideAtlas" id="P56179"/>
<dbReference type="ProteomicsDB" id="56893">
    <molecule id="P56179-1"/>
</dbReference>
<dbReference type="ProteomicsDB" id="56894">
    <molecule id="P56179-2"/>
</dbReference>
<dbReference type="Antibodypedia" id="30192">
    <property type="antibodies" value="178 antibodies from 24 providers"/>
</dbReference>
<dbReference type="DNASU" id="1750"/>
<dbReference type="Ensembl" id="ENST00000518156.3">
    <molecule id="P56179-3"/>
    <property type="protein sequence ID" value="ENSP00000428480.2"/>
    <property type="gene ID" value="ENSG00000006377.11"/>
</dbReference>
<dbReference type="GeneID" id="1750"/>
<dbReference type="KEGG" id="hsa:1750"/>
<dbReference type="MANE-Select" id="ENST00000518156.3">
    <molecule id="P56179-3"/>
    <property type="protein sequence ID" value="ENSP00000428480.2"/>
    <property type="RefSeq nucleotide sequence ID" value="NM_005222.4"/>
    <property type="RefSeq protein sequence ID" value="NP_005213.3"/>
</dbReference>
<dbReference type="UCSC" id="uc022ahu.2">
    <molecule id="P56179-1"/>
    <property type="organism name" value="human"/>
</dbReference>
<dbReference type="AGR" id="HGNC:2919"/>
<dbReference type="CTD" id="1750"/>
<dbReference type="DisGeNET" id="1750"/>
<dbReference type="GeneCards" id="DLX6"/>
<dbReference type="HGNC" id="HGNC:2919">
    <property type="gene designation" value="DLX6"/>
</dbReference>
<dbReference type="HPA" id="ENSG00000006377">
    <property type="expression patterns" value="Tissue enhanced (brain, testis)"/>
</dbReference>
<dbReference type="MalaCards" id="DLX6"/>
<dbReference type="MIM" id="600030">
    <property type="type" value="gene"/>
</dbReference>
<dbReference type="neXtProt" id="NX_P56179"/>
<dbReference type="OpenTargets" id="ENSG00000006377"/>
<dbReference type="Orphanet" id="2440">
    <property type="disease" value="Isolated split hand-split foot malformation"/>
</dbReference>
<dbReference type="PharmGKB" id="PA27374"/>
<dbReference type="VEuPathDB" id="HostDB:ENSG00000006377"/>
<dbReference type="eggNOG" id="KOG0850">
    <property type="taxonomic scope" value="Eukaryota"/>
</dbReference>
<dbReference type="GeneTree" id="ENSGT00940000157683"/>
<dbReference type="HOGENOM" id="CLU_074733_2_0_1"/>
<dbReference type="InParanoid" id="P56179"/>
<dbReference type="OMA" id="PSYHNNA"/>
<dbReference type="OrthoDB" id="6159439at2759"/>
<dbReference type="PAN-GO" id="P56179">
    <property type="GO annotations" value="5 GO annotations based on evolutionary models"/>
</dbReference>
<dbReference type="PhylomeDB" id="P56179"/>
<dbReference type="TreeFam" id="TF315720"/>
<dbReference type="PathwayCommons" id="P56179"/>
<dbReference type="Reactome" id="R-HSA-8939902">
    <property type="pathway name" value="Regulation of RUNX2 expression and activity"/>
</dbReference>
<dbReference type="SignaLink" id="P56179"/>
<dbReference type="BioGRID-ORCS" id="1750">
    <property type="hits" value="13 hits in 1158 CRISPR screens"/>
</dbReference>
<dbReference type="GeneWiki" id="DLX6"/>
<dbReference type="GenomeRNAi" id="1750"/>
<dbReference type="Pharos" id="P56179">
    <property type="development level" value="Tbio"/>
</dbReference>
<dbReference type="PRO" id="PR:P56179"/>
<dbReference type="Proteomes" id="UP000005640">
    <property type="component" value="Chromosome 7"/>
</dbReference>
<dbReference type="RNAct" id="P56179">
    <property type="molecule type" value="protein"/>
</dbReference>
<dbReference type="Bgee" id="ENSG00000006377">
    <property type="expression patterns" value="Expressed in buccal mucosa cell and 99 other cell types or tissues"/>
</dbReference>
<dbReference type="ExpressionAtlas" id="P56179">
    <property type="expression patterns" value="baseline and differential"/>
</dbReference>
<dbReference type="GO" id="GO:0000785">
    <property type="term" value="C:chromatin"/>
    <property type="evidence" value="ECO:0000247"/>
    <property type="project" value="NTNU_SB"/>
</dbReference>
<dbReference type="GO" id="GO:0005634">
    <property type="term" value="C:nucleus"/>
    <property type="evidence" value="ECO:0007669"/>
    <property type="project" value="UniProtKB-SubCell"/>
</dbReference>
<dbReference type="GO" id="GO:0003700">
    <property type="term" value="F:DNA-binding transcription factor activity"/>
    <property type="evidence" value="ECO:0000304"/>
    <property type="project" value="ProtInc"/>
</dbReference>
<dbReference type="GO" id="GO:0000981">
    <property type="term" value="F:DNA-binding transcription factor activity, RNA polymerase II-specific"/>
    <property type="evidence" value="ECO:0000247"/>
    <property type="project" value="NTNU_SB"/>
</dbReference>
<dbReference type="GO" id="GO:0000978">
    <property type="term" value="F:RNA polymerase II cis-regulatory region sequence-specific DNA binding"/>
    <property type="evidence" value="ECO:0000318"/>
    <property type="project" value="GO_Central"/>
</dbReference>
<dbReference type="GO" id="GO:1990837">
    <property type="term" value="F:sequence-specific double-stranded DNA binding"/>
    <property type="evidence" value="ECO:0000314"/>
    <property type="project" value="ARUK-UCL"/>
</dbReference>
<dbReference type="GO" id="GO:0048646">
    <property type="term" value="P:anatomical structure formation involved in morphogenesis"/>
    <property type="evidence" value="ECO:0007669"/>
    <property type="project" value="Ensembl"/>
</dbReference>
<dbReference type="GO" id="GO:0030154">
    <property type="term" value="P:cell differentiation"/>
    <property type="evidence" value="ECO:0000318"/>
    <property type="project" value="GO_Central"/>
</dbReference>
<dbReference type="GO" id="GO:0030326">
    <property type="term" value="P:embryonic limb morphogenesis"/>
    <property type="evidence" value="ECO:0007669"/>
    <property type="project" value="Ensembl"/>
</dbReference>
<dbReference type="GO" id="GO:0048706">
    <property type="term" value="P:embryonic skeletal system development"/>
    <property type="evidence" value="ECO:0000318"/>
    <property type="project" value="GO_Central"/>
</dbReference>
<dbReference type="GO" id="GO:0030855">
    <property type="term" value="P:epithelial cell differentiation"/>
    <property type="evidence" value="ECO:0007669"/>
    <property type="project" value="Ensembl"/>
</dbReference>
<dbReference type="GO" id="GO:0060322">
    <property type="term" value="P:head development"/>
    <property type="evidence" value="ECO:0007669"/>
    <property type="project" value="Ensembl"/>
</dbReference>
<dbReference type="GO" id="GO:0042472">
    <property type="term" value="P:inner ear morphogenesis"/>
    <property type="evidence" value="ECO:0007669"/>
    <property type="project" value="Ensembl"/>
</dbReference>
<dbReference type="GO" id="GO:0007399">
    <property type="term" value="P:nervous system development"/>
    <property type="evidence" value="ECO:0000304"/>
    <property type="project" value="ProtInc"/>
</dbReference>
<dbReference type="GO" id="GO:0050679">
    <property type="term" value="P:positive regulation of epithelial cell proliferation"/>
    <property type="evidence" value="ECO:0007669"/>
    <property type="project" value="Ensembl"/>
</dbReference>
<dbReference type="GO" id="GO:0006357">
    <property type="term" value="P:regulation of transcription by RNA polymerase II"/>
    <property type="evidence" value="ECO:0000318"/>
    <property type="project" value="GO_Central"/>
</dbReference>
<dbReference type="GO" id="GO:0060021">
    <property type="term" value="P:roof of mouth development"/>
    <property type="evidence" value="ECO:0007669"/>
    <property type="project" value="Ensembl"/>
</dbReference>
<dbReference type="GO" id="GO:0001501">
    <property type="term" value="P:skeletal system development"/>
    <property type="evidence" value="ECO:0000304"/>
    <property type="project" value="ProtInc"/>
</dbReference>
<dbReference type="CDD" id="cd00086">
    <property type="entry name" value="homeodomain"/>
    <property type="match status" value="1"/>
</dbReference>
<dbReference type="FunFam" id="1.10.10.60:FF:000468">
    <property type="entry name" value="Distal-less homeobox 6"/>
    <property type="match status" value="1"/>
</dbReference>
<dbReference type="Gene3D" id="1.10.10.60">
    <property type="entry name" value="Homeodomain-like"/>
    <property type="match status" value="1"/>
</dbReference>
<dbReference type="InterPro" id="IPR050460">
    <property type="entry name" value="Distal-less_Homeobox_TF"/>
</dbReference>
<dbReference type="InterPro" id="IPR001356">
    <property type="entry name" value="HD"/>
</dbReference>
<dbReference type="InterPro" id="IPR020479">
    <property type="entry name" value="HD_metazoa"/>
</dbReference>
<dbReference type="InterPro" id="IPR017970">
    <property type="entry name" value="Homeobox_CS"/>
</dbReference>
<dbReference type="InterPro" id="IPR009057">
    <property type="entry name" value="Homeodomain-like_sf"/>
</dbReference>
<dbReference type="InterPro" id="IPR000047">
    <property type="entry name" value="HTH_motif"/>
</dbReference>
<dbReference type="PANTHER" id="PTHR24327">
    <property type="entry name" value="HOMEOBOX PROTEIN"/>
    <property type="match status" value="1"/>
</dbReference>
<dbReference type="PANTHER" id="PTHR24327:SF26">
    <property type="entry name" value="HOMEOBOX PROTEIN DLX-6"/>
    <property type="match status" value="1"/>
</dbReference>
<dbReference type="Pfam" id="PF00046">
    <property type="entry name" value="Homeodomain"/>
    <property type="match status" value="1"/>
</dbReference>
<dbReference type="PRINTS" id="PR00024">
    <property type="entry name" value="HOMEOBOX"/>
</dbReference>
<dbReference type="PRINTS" id="PR00031">
    <property type="entry name" value="HTHREPRESSR"/>
</dbReference>
<dbReference type="SMART" id="SM00389">
    <property type="entry name" value="HOX"/>
    <property type="match status" value="1"/>
</dbReference>
<dbReference type="SUPFAM" id="SSF46689">
    <property type="entry name" value="Homeodomain-like"/>
    <property type="match status" value="1"/>
</dbReference>
<dbReference type="PROSITE" id="PS00027">
    <property type="entry name" value="HOMEOBOX_1"/>
    <property type="match status" value="1"/>
</dbReference>
<dbReference type="PROSITE" id="PS50071">
    <property type="entry name" value="HOMEOBOX_2"/>
    <property type="match status" value="1"/>
</dbReference>
<proteinExistence type="evidence at protein level"/>
<keyword id="KW-0025">Alternative splicing</keyword>
<keyword id="KW-0217">Developmental protein</keyword>
<keyword id="KW-0238">DNA-binding</keyword>
<keyword id="KW-0371">Homeobox</keyword>
<keyword id="KW-0539">Nucleus</keyword>
<keyword id="KW-1267">Proteomics identification</keyword>
<keyword id="KW-1185">Reference proteome</keyword>
<feature type="chain" id="PRO_0000049034" description="Homeobox protein DLX-6">
    <location>
        <begin position="1"/>
        <end position="175"/>
    </location>
</feature>
<feature type="DNA-binding region" description="Homeobox" evidence="1">
    <location>
        <begin position="49"/>
        <end position="108"/>
    </location>
</feature>
<feature type="region of interest" description="Disordered" evidence="2">
    <location>
        <begin position="1"/>
        <end position="32"/>
    </location>
</feature>
<feature type="region of interest" description="Disordered" evidence="2">
    <location>
        <begin position="109"/>
        <end position="131"/>
    </location>
</feature>
<feature type="compositionally biased region" description="Polar residues" evidence="2">
    <location>
        <begin position="1"/>
        <end position="20"/>
    </location>
</feature>
<feature type="splice variant" id="VSP_040732" description="In isoform 2." evidence="3">
    <original>M</original>
    <variation>MMTMTTMADGLEGQDSSKSAFMEFGQQQQQQHSPAMAGAHYPLHCLHSAAAAAAAGSHHHHHHQHHHHGSPYASGGGNSYNHRSLAAYPYM</variation>
    <location>
        <position position="1"/>
    </location>
</feature>
<feature type="splice variant" id="VSP_047248" description="In isoform 3." evidence="3">
    <original>M</original>
    <variation>MMTMTTMADGLEGQDSSKSAFMEFGQQQQQQQQQQQQQQQQQQQPPPPPPPPPQPHSQQSSPAMAGAHYPLHCLHSAAAAAAAGSHHHHHHQHHHHGSPYASGGGNSYNHRSLAAYPYM</variation>
    <location>
        <position position="1"/>
    </location>
</feature>
<sequence>MSHSQHSPYLQSYHNSSAAAQTRGDDTDQQKTTVIENGEIRFNGKGKKIRKPRTIYSSLQLQALNHRFQQTQYLALPERAELAASLGLTQTQVKIWFQNKRSKFKKLLKQGSNPHESDPLQGSAALSPRSPALPPVWDVSASAKGVSMPPNSYMPGYSHWYSSPHQDTMQRPQMM</sequence>
<evidence type="ECO:0000255" key="1">
    <source>
        <dbReference type="PROSITE-ProRule" id="PRU00108"/>
    </source>
</evidence>
<evidence type="ECO:0000256" key="2">
    <source>
        <dbReference type="SAM" id="MobiDB-lite"/>
    </source>
</evidence>
<evidence type="ECO:0000305" key="3"/>
<protein>
    <recommendedName>
        <fullName>Homeobox protein DLX-6</fullName>
    </recommendedName>
</protein>
<name>DLX6_HUMAN</name>
<reference key="1">
    <citation type="journal article" date="2003" name="Nature">
        <title>The DNA sequence of human chromosome 7.</title>
        <authorList>
            <person name="Hillier L.W."/>
            <person name="Fulton R.S."/>
            <person name="Fulton L.A."/>
            <person name="Graves T.A."/>
            <person name="Pepin K.H."/>
            <person name="Wagner-McPherson C."/>
            <person name="Layman D."/>
            <person name="Maas J."/>
            <person name="Jaeger S."/>
            <person name="Walker R."/>
            <person name="Wylie K."/>
            <person name="Sekhon M."/>
            <person name="Becker M.C."/>
            <person name="O'Laughlin M.D."/>
            <person name="Schaller M.E."/>
            <person name="Fewell G.A."/>
            <person name="Delehaunty K.D."/>
            <person name="Miner T.L."/>
            <person name="Nash W.E."/>
            <person name="Cordes M."/>
            <person name="Du H."/>
            <person name="Sun H."/>
            <person name="Edwards J."/>
            <person name="Bradshaw-Cordum H."/>
            <person name="Ali J."/>
            <person name="Andrews S."/>
            <person name="Isak A."/>
            <person name="Vanbrunt A."/>
            <person name="Nguyen C."/>
            <person name="Du F."/>
            <person name="Lamar B."/>
            <person name="Courtney L."/>
            <person name="Kalicki J."/>
            <person name="Ozersky P."/>
            <person name="Bielicki L."/>
            <person name="Scott K."/>
            <person name="Holmes A."/>
            <person name="Harkins R."/>
            <person name="Harris A."/>
            <person name="Strong C.M."/>
            <person name="Hou S."/>
            <person name="Tomlinson C."/>
            <person name="Dauphin-Kohlberg S."/>
            <person name="Kozlowicz-Reilly A."/>
            <person name="Leonard S."/>
            <person name="Rohlfing T."/>
            <person name="Rock S.M."/>
            <person name="Tin-Wollam A.-M."/>
            <person name="Abbott A."/>
            <person name="Minx P."/>
            <person name="Maupin R."/>
            <person name="Strowmatt C."/>
            <person name="Latreille P."/>
            <person name="Miller N."/>
            <person name="Johnson D."/>
            <person name="Murray J."/>
            <person name="Woessner J.P."/>
            <person name="Wendl M.C."/>
            <person name="Yang S.-P."/>
            <person name="Schultz B.R."/>
            <person name="Wallis J.W."/>
            <person name="Spieth J."/>
            <person name="Bieri T.A."/>
            <person name="Nelson J.O."/>
            <person name="Berkowicz N."/>
            <person name="Wohldmann P.E."/>
            <person name="Cook L.L."/>
            <person name="Hickenbotham M.T."/>
            <person name="Eldred J."/>
            <person name="Williams D."/>
            <person name="Bedell J.A."/>
            <person name="Mardis E.R."/>
            <person name="Clifton S.W."/>
            <person name="Chissoe S.L."/>
            <person name="Marra M.A."/>
            <person name="Raymond C."/>
            <person name="Haugen E."/>
            <person name="Gillett W."/>
            <person name="Zhou Y."/>
            <person name="James R."/>
            <person name="Phelps K."/>
            <person name="Iadanoto S."/>
            <person name="Bubb K."/>
            <person name="Simms E."/>
            <person name="Levy R."/>
            <person name="Clendenning J."/>
            <person name="Kaul R."/>
            <person name="Kent W.J."/>
            <person name="Furey T.S."/>
            <person name="Baertsch R.A."/>
            <person name="Brent M.R."/>
            <person name="Keibler E."/>
            <person name="Flicek P."/>
            <person name="Bork P."/>
            <person name="Suyama M."/>
            <person name="Bailey J.A."/>
            <person name="Portnoy M.E."/>
            <person name="Torrents D."/>
            <person name="Chinwalla A.T."/>
            <person name="Gish W.R."/>
            <person name="Eddy S.R."/>
            <person name="McPherson J.D."/>
            <person name="Olson M.V."/>
            <person name="Eichler E.E."/>
            <person name="Green E.D."/>
            <person name="Waterston R.H."/>
            <person name="Wilson R.K."/>
        </authorList>
    </citation>
    <scope>NUCLEOTIDE SEQUENCE [LARGE SCALE GENOMIC DNA]</scope>
</reference>
<reference key="2">
    <citation type="journal article" date="2003" name="Science">
        <title>Human chromosome 7: DNA sequence and biology.</title>
        <authorList>
            <person name="Scherer S.W."/>
            <person name="Cheung J."/>
            <person name="MacDonald J.R."/>
            <person name="Osborne L.R."/>
            <person name="Nakabayashi K."/>
            <person name="Herbrick J.-A."/>
            <person name="Carson A.R."/>
            <person name="Parker-Katiraee L."/>
            <person name="Skaug J."/>
            <person name="Khaja R."/>
            <person name="Zhang J."/>
            <person name="Hudek A.K."/>
            <person name="Li M."/>
            <person name="Haddad M."/>
            <person name="Duggan G.E."/>
            <person name="Fernandez B.A."/>
            <person name="Kanematsu E."/>
            <person name="Gentles S."/>
            <person name="Christopoulos C.C."/>
            <person name="Choufani S."/>
            <person name="Kwasnicka D."/>
            <person name="Zheng X.H."/>
            <person name="Lai Z."/>
            <person name="Nusskern D.R."/>
            <person name="Zhang Q."/>
            <person name="Gu Z."/>
            <person name="Lu F."/>
            <person name="Zeesman S."/>
            <person name="Nowaczyk M.J."/>
            <person name="Teshima I."/>
            <person name="Chitayat D."/>
            <person name="Shuman C."/>
            <person name="Weksberg R."/>
            <person name="Zackai E.H."/>
            <person name="Grebe T.A."/>
            <person name="Cox S.R."/>
            <person name="Kirkpatrick S.J."/>
            <person name="Rahman N."/>
            <person name="Friedman J.M."/>
            <person name="Heng H.H.Q."/>
            <person name="Pelicci P.G."/>
            <person name="Lo-Coco F."/>
            <person name="Belloni E."/>
            <person name="Shaffer L.G."/>
            <person name="Pober B."/>
            <person name="Morton C.C."/>
            <person name="Gusella J.F."/>
            <person name="Bruns G.A.P."/>
            <person name="Korf B.R."/>
            <person name="Quade B.J."/>
            <person name="Ligon A.H."/>
            <person name="Ferguson H."/>
            <person name="Higgins A.W."/>
            <person name="Leach N.T."/>
            <person name="Herrick S.R."/>
            <person name="Lemyre E."/>
            <person name="Farra C.G."/>
            <person name="Kim H.-G."/>
            <person name="Summers A.M."/>
            <person name="Gripp K.W."/>
            <person name="Roberts W."/>
            <person name="Szatmari P."/>
            <person name="Winsor E.J.T."/>
            <person name="Grzeschik K.-H."/>
            <person name="Teebi A."/>
            <person name="Minassian B.A."/>
            <person name="Kere J."/>
            <person name="Armengol L."/>
            <person name="Pujana M.A."/>
            <person name="Estivill X."/>
            <person name="Wilson M.D."/>
            <person name="Koop B.F."/>
            <person name="Tosi S."/>
            <person name="Moore G.E."/>
            <person name="Boright A.P."/>
            <person name="Zlotorynski E."/>
            <person name="Kerem B."/>
            <person name="Kroisel P.M."/>
            <person name="Petek E."/>
            <person name="Oscier D.G."/>
            <person name="Mould S.J."/>
            <person name="Doehner H."/>
            <person name="Doehner K."/>
            <person name="Rommens J.M."/>
            <person name="Vincent J.B."/>
            <person name="Venter J.C."/>
            <person name="Li P.W."/>
            <person name="Mural R.J."/>
            <person name="Adams M.D."/>
            <person name="Tsui L.-C."/>
        </authorList>
    </citation>
    <scope>NUCLEOTIDE SEQUENCE [LARGE SCALE GENOMIC DNA]</scope>
</reference>
<reference key="3">
    <citation type="submission" date="2005-09" db="EMBL/GenBank/DDBJ databases">
        <authorList>
            <person name="Mural R.J."/>
            <person name="Istrail S."/>
            <person name="Sutton G.G."/>
            <person name="Florea L."/>
            <person name="Halpern A.L."/>
            <person name="Mobarry C.M."/>
            <person name="Lippert R."/>
            <person name="Walenz B."/>
            <person name="Shatkay H."/>
            <person name="Dew I."/>
            <person name="Miller J.R."/>
            <person name="Flanigan M.J."/>
            <person name="Edwards N.J."/>
            <person name="Bolanos R."/>
            <person name="Fasulo D."/>
            <person name="Halldorsson B.V."/>
            <person name="Hannenhalli S."/>
            <person name="Turner R."/>
            <person name="Yooseph S."/>
            <person name="Lu F."/>
            <person name="Nusskern D.R."/>
            <person name="Shue B.C."/>
            <person name="Zheng X.H."/>
            <person name="Zhong F."/>
            <person name="Delcher A.L."/>
            <person name="Huson D.H."/>
            <person name="Kravitz S.A."/>
            <person name="Mouchard L."/>
            <person name="Reinert K."/>
            <person name="Remington K.A."/>
            <person name="Clark A.G."/>
            <person name="Waterman M.S."/>
            <person name="Eichler E.E."/>
            <person name="Adams M.D."/>
            <person name="Hunkapiller M.W."/>
            <person name="Myers E.W."/>
            <person name="Venter J.C."/>
        </authorList>
    </citation>
    <scope>NUCLEOTIDE SEQUENCE [LARGE SCALE GENOMIC DNA]</scope>
</reference>
<reference key="4">
    <citation type="journal article" date="2004" name="Genome Res.">
        <title>The status, quality, and expansion of the NIH full-length cDNA project: the Mammalian Gene Collection (MGC).</title>
        <authorList>
            <consortium name="The MGC Project Team"/>
        </authorList>
    </citation>
    <scope>NUCLEOTIDE SEQUENCE [LARGE SCALE MRNA] (ISOFORM 1)</scope>
</reference>
<reference key="5">
    <citation type="journal article" date="2004" name="Nat. Genet.">
        <title>Complete sequencing and characterization of 21,243 full-length human cDNAs.</title>
        <authorList>
            <person name="Ota T."/>
            <person name="Suzuki Y."/>
            <person name="Nishikawa T."/>
            <person name="Otsuki T."/>
            <person name="Sugiyama T."/>
            <person name="Irie R."/>
            <person name="Wakamatsu A."/>
            <person name="Hayashi K."/>
            <person name="Sato H."/>
            <person name="Nagai K."/>
            <person name="Kimura K."/>
            <person name="Makita H."/>
            <person name="Sekine M."/>
            <person name="Obayashi M."/>
            <person name="Nishi T."/>
            <person name="Shibahara T."/>
            <person name="Tanaka T."/>
            <person name="Ishii S."/>
            <person name="Yamamoto J."/>
            <person name="Saito K."/>
            <person name="Kawai Y."/>
            <person name="Isono Y."/>
            <person name="Nakamura Y."/>
            <person name="Nagahari K."/>
            <person name="Murakami K."/>
            <person name="Yasuda T."/>
            <person name="Iwayanagi T."/>
            <person name="Wagatsuma M."/>
            <person name="Shiratori A."/>
            <person name="Sudo H."/>
            <person name="Hosoiri T."/>
            <person name="Kaku Y."/>
            <person name="Kodaira H."/>
            <person name="Kondo H."/>
            <person name="Sugawara M."/>
            <person name="Takahashi M."/>
            <person name="Kanda K."/>
            <person name="Yokoi T."/>
            <person name="Furuya T."/>
            <person name="Kikkawa E."/>
            <person name="Omura Y."/>
            <person name="Abe K."/>
            <person name="Kamihara K."/>
            <person name="Katsuta N."/>
            <person name="Sato K."/>
            <person name="Tanikawa M."/>
            <person name="Yamazaki M."/>
            <person name="Ninomiya K."/>
            <person name="Ishibashi T."/>
            <person name="Yamashita H."/>
            <person name="Murakawa K."/>
            <person name="Fujimori K."/>
            <person name="Tanai H."/>
            <person name="Kimata M."/>
            <person name="Watanabe M."/>
            <person name="Hiraoka S."/>
            <person name="Chiba Y."/>
            <person name="Ishida S."/>
            <person name="Ono Y."/>
            <person name="Takiguchi S."/>
            <person name="Watanabe S."/>
            <person name="Yosida M."/>
            <person name="Hotuta T."/>
            <person name="Kusano J."/>
            <person name="Kanehori K."/>
            <person name="Takahashi-Fujii A."/>
            <person name="Hara H."/>
            <person name="Tanase T.-O."/>
            <person name="Nomura Y."/>
            <person name="Togiya S."/>
            <person name="Komai F."/>
            <person name="Hara R."/>
            <person name="Takeuchi K."/>
            <person name="Arita M."/>
            <person name="Imose N."/>
            <person name="Musashino K."/>
            <person name="Yuuki H."/>
            <person name="Oshima A."/>
            <person name="Sasaki N."/>
            <person name="Aotsuka S."/>
            <person name="Yoshikawa Y."/>
            <person name="Matsunawa H."/>
            <person name="Ichihara T."/>
            <person name="Shiohata N."/>
            <person name="Sano S."/>
            <person name="Moriya S."/>
            <person name="Momiyama H."/>
            <person name="Satoh N."/>
            <person name="Takami S."/>
            <person name="Terashima Y."/>
            <person name="Suzuki O."/>
            <person name="Nakagawa S."/>
            <person name="Senoh A."/>
            <person name="Mizoguchi H."/>
            <person name="Goto Y."/>
            <person name="Shimizu F."/>
            <person name="Wakebe H."/>
            <person name="Hishigaki H."/>
            <person name="Watanabe T."/>
            <person name="Sugiyama A."/>
            <person name="Takemoto M."/>
            <person name="Kawakami B."/>
            <person name="Yamazaki M."/>
            <person name="Watanabe K."/>
            <person name="Kumagai A."/>
            <person name="Itakura S."/>
            <person name="Fukuzumi Y."/>
            <person name="Fujimori Y."/>
            <person name="Komiyama M."/>
            <person name="Tashiro H."/>
            <person name="Tanigami A."/>
            <person name="Fujiwara T."/>
            <person name="Ono T."/>
            <person name="Yamada K."/>
            <person name="Fujii Y."/>
            <person name="Ozaki K."/>
            <person name="Hirao M."/>
            <person name="Ohmori Y."/>
            <person name="Kawabata A."/>
            <person name="Hikiji T."/>
            <person name="Kobatake N."/>
            <person name="Inagaki H."/>
            <person name="Ikema Y."/>
            <person name="Okamoto S."/>
            <person name="Okitani R."/>
            <person name="Kawakami T."/>
            <person name="Noguchi S."/>
            <person name="Itoh T."/>
            <person name="Shigeta K."/>
            <person name="Senba T."/>
            <person name="Matsumura K."/>
            <person name="Nakajima Y."/>
            <person name="Mizuno T."/>
            <person name="Morinaga M."/>
            <person name="Sasaki M."/>
            <person name="Togashi T."/>
            <person name="Oyama M."/>
            <person name="Hata H."/>
            <person name="Watanabe M."/>
            <person name="Komatsu T."/>
            <person name="Mizushima-Sugano J."/>
            <person name="Satoh T."/>
            <person name="Shirai Y."/>
            <person name="Takahashi Y."/>
            <person name="Nakagawa K."/>
            <person name="Okumura K."/>
            <person name="Nagase T."/>
            <person name="Nomura N."/>
            <person name="Kikuchi H."/>
            <person name="Masuho Y."/>
            <person name="Yamashita R."/>
            <person name="Nakai K."/>
            <person name="Yada T."/>
            <person name="Nakamura Y."/>
            <person name="Ohara O."/>
            <person name="Isogai T."/>
            <person name="Sugano S."/>
        </authorList>
    </citation>
    <scope>PARTIAL NUCLEOTIDE SEQUENCE [LARGE SCALE MRNA] (ISOFORM 2)</scope>
    <source>
        <tissue>Neuroblastoma</tissue>
    </source>
</reference>
<reference key="6">
    <citation type="journal article" date="1994" name="Proc. Natl. Acad. Sci. U.S.A.">
        <title>Cloning and characterization of two members of the vertebrate Dlx gene family.</title>
        <authorList>
            <person name="Simeone A."/>
            <person name="Acampora D."/>
            <person name="Pannese M."/>
            <person name="D'Esposito M."/>
            <person name="Stornaiuolo A."/>
            <person name="Gulisano M."/>
            <person name="Mallamaci A."/>
            <person name="Kastury K."/>
            <person name="Druck T."/>
            <person name="Huebner K."/>
            <person name="Boncinelli E."/>
        </authorList>
    </citation>
    <scope>NUCLEOTIDE SEQUENCE OF 49-114</scope>
    <source>
        <tissue>Embryo</tissue>
    </source>
</reference>